<protein>
    <recommendedName>
        <fullName>Transmembrane protein 35B</fullName>
    </recommendedName>
    <alternativeName>
        <fullName>ZMYM6 neighbor protein</fullName>
    </alternativeName>
</protein>
<reference key="1">
    <citation type="journal article" date="2005" name="Science">
        <title>The transcriptional landscape of the mammalian genome.</title>
        <authorList>
            <person name="Carninci P."/>
            <person name="Kasukawa T."/>
            <person name="Katayama S."/>
            <person name="Gough J."/>
            <person name="Frith M.C."/>
            <person name="Maeda N."/>
            <person name="Oyama R."/>
            <person name="Ravasi T."/>
            <person name="Lenhard B."/>
            <person name="Wells C."/>
            <person name="Kodzius R."/>
            <person name="Shimokawa K."/>
            <person name="Bajic V.B."/>
            <person name="Brenner S.E."/>
            <person name="Batalov S."/>
            <person name="Forrest A.R."/>
            <person name="Zavolan M."/>
            <person name="Davis M.J."/>
            <person name="Wilming L.G."/>
            <person name="Aidinis V."/>
            <person name="Allen J.E."/>
            <person name="Ambesi-Impiombato A."/>
            <person name="Apweiler R."/>
            <person name="Aturaliya R.N."/>
            <person name="Bailey T.L."/>
            <person name="Bansal M."/>
            <person name="Baxter L."/>
            <person name="Beisel K.W."/>
            <person name="Bersano T."/>
            <person name="Bono H."/>
            <person name="Chalk A.M."/>
            <person name="Chiu K.P."/>
            <person name="Choudhary V."/>
            <person name="Christoffels A."/>
            <person name="Clutterbuck D.R."/>
            <person name="Crowe M.L."/>
            <person name="Dalla E."/>
            <person name="Dalrymple B.P."/>
            <person name="de Bono B."/>
            <person name="Della Gatta G."/>
            <person name="di Bernardo D."/>
            <person name="Down T."/>
            <person name="Engstrom P."/>
            <person name="Fagiolini M."/>
            <person name="Faulkner G."/>
            <person name="Fletcher C.F."/>
            <person name="Fukushima T."/>
            <person name="Furuno M."/>
            <person name="Futaki S."/>
            <person name="Gariboldi M."/>
            <person name="Georgii-Hemming P."/>
            <person name="Gingeras T.R."/>
            <person name="Gojobori T."/>
            <person name="Green R.E."/>
            <person name="Gustincich S."/>
            <person name="Harbers M."/>
            <person name="Hayashi Y."/>
            <person name="Hensch T.K."/>
            <person name="Hirokawa N."/>
            <person name="Hill D."/>
            <person name="Huminiecki L."/>
            <person name="Iacono M."/>
            <person name="Ikeo K."/>
            <person name="Iwama A."/>
            <person name="Ishikawa T."/>
            <person name="Jakt M."/>
            <person name="Kanapin A."/>
            <person name="Katoh M."/>
            <person name="Kawasawa Y."/>
            <person name="Kelso J."/>
            <person name="Kitamura H."/>
            <person name="Kitano H."/>
            <person name="Kollias G."/>
            <person name="Krishnan S.P."/>
            <person name="Kruger A."/>
            <person name="Kummerfeld S.K."/>
            <person name="Kurochkin I.V."/>
            <person name="Lareau L.F."/>
            <person name="Lazarevic D."/>
            <person name="Lipovich L."/>
            <person name="Liu J."/>
            <person name="Liuni S."/>
            <person name="McWilliam S."/>
            <person name="Madan Babu M."/>
            <person name="Madera M."/>
            <person name="Marchionni L."/>
            <person name="Matsuda H."/>
            <person name="Matsuzawa S."/>
            <person name="Miki H."/>
            <person name="Mignone F."/>
            <person name="Miyake S."/>
            <person name="Morris K."/>
            <person name="Mottagui-Tabar S."/>
            <person name="Mulder N."/>
            <person name="Nakano N."/>
            <person name="Nakauchi H."/>
            <person name="Ng P."/>
            <person name="Nilsson R."/>
            <person name="Nishiguchi S."/>
            <person name="Nishikawa S."/>
            <person name="Nori F."/>
            <person name="Ohara O."/>
            <person name="Okazaki Y."/>
            <person name="Orlando V."/>
            <person name="Pang K.C."/>
            <person name="Pavan W.J."/>
            <person name="Pavesi G."/>
            <person name="Pesole G."/>
            <person name="Petrovsky N."/>
            <person name="Piazza S."/>
            <person name="Reed J."/>
            <person name="Reid J.F."/>
            <person name="Ring B.Z."/>
            <person name="Ringwald M."/>
            <person name="Rost B."/>
            <person name="Ruan Y."/>
            <person name="Salzberg S.L."/>
            <person name="Sandelin A."/>
            <person name="Schneider C."/>
            <person name="Schoenbach C."/>
            <person name="Sekiguchi K."/>
            <person name="Semple C.A."/>
            <person name="Seno S."/>
            <person name="Sessa L."/>
            <person name="Sheng Y."/>
            <person name="Shibata Y."/>
            <person name="Shimada H."/>
            <person name="Shimada K."/>
            <person name="Silva D."/>
            <person name="Sinclair B."/>
            <person name="Sperling S."/>
            <person name="Stupka E."/>
            <person name="Sugiura K."/>
            <person name="Sultana R."/>
            <person name="Takenaka Y."/>
            <person name="Taki K."/>
            <person name="Tammoja K."/>
            <person name="Tan S.L."/>
            <person name="Tang S."/>
            <person name="Taylor M.S."/>
            <person name="Tegner J."/>
            <person name="Teichmann S.A."/>
            <person name="Ueda H.R."/>
            <person name="van Nimwegen E."/>
            <person name="Verardo R."/>
            <person name="Wei C.L."/>
            <person name="Yagi K."/>
            <person name="Yamanishi H."/>
            <person name="Zabarovsky E."/>
            <person name="Zhu S."/>
            <person name="Zimmer A."/>
            <person name="Hide W."/>
            <person name="Bult C."/>
            <person name="Grimmond S.M."/>
            <person name="Teasdale R.D."/>
            <person name="Liu E.T."/>
            <person name="Brusic V."/>
            <person name="Quackenbush J."/>
            <person name="Wahlestedt C."/>
            <person name="Mattick J.S."/>
            <person name="Hume D.A."/>
            <person name="Kai C."/>
            <person name="Sasaki D."/>
            <person name="Tomaru Y."/>
            <person name="Fukuda S."/>
            <person name="Kanamori-Katayama M."/>
            <person name="Suzuki M."/>
            <person name="Aoki J."/>
            <person name="Arakawa T."/>
            <person name="Iida J."/>
            <person name="Imamura K."/>
            <person name="Itoh M."/>
            <person name="Kato T."/>
            <person name="Kawaji H."/>
            <person name="Kawagashira N."/>
            <person name="Kawashima T."/>
            <person name="Kojima M."/>
            <person name="Kondo S."/>
            <person name="Konno H."/>
            <person name="Nakano K."/>
            <person name="Ninomiya N."/>
            <person name="Nishio T."/>
            <person name="Okada M."/>
            <person name="Plessy C."/>
            <person name="Shibata K."/>
            <person name="Shiraki T."/>
            <person name="Suzuki S."/>
            <person name="Tagami M."/>
            <person name="Waki K."/>
            <person name="Watahiki A."/>
            <person name="Okamura-Oho Y."/>
            <person name="Suzuki H."/>
            <person name="Kawai J."/>
            <person name="Hayashizaki Y."/>
        </authorList>
    </citation>
    <scope>NUCLEOTIDE SEQUENCE [LARGE SCALE MRNA]</scope>
    <source>
        <strain>NOD</strain>
        <tissue>Spleen</tissue>
    </source>
</reference>
<reference key="2">
    <citation type="journal article" date="2009" name="PLoS Biol.">
        <title>Lineage-specific biology revealed by a finished genome assembly of the mouse.</title>
        <authorList>
            <person name="Church D.M."/>
            <person name="Goodstadt L."/>
            <person name="Hillier L.W."/>
            <person name="Zody M.C."/>
            <person name="Goldstein S."/>
            <person name="She X."/>
            <person name="Bult C.J."/>
            <person name="Agarwala R."/>
            <person name="Cherry J.L."/>
            <person name="DiCuccio M."/>
            <person name="Hlavina W."/>
            <person name="Kapustin Y."/>
            <person name="Meric P."/>
            <person name="Maglott D."/>
            <person name="Birtle Z."/>
            <person name="Marques A.C."/>
            <person name="Graves T."/>
            <person name="Zhou S."/>
            <person name="Teague B."/>
            <person name="Potamousis K."/>
            <person name="Churas C."/>
            <person name="Place M."/>
            <person name="Herschleb J."/>
            <person name="Runnheim R."/>
            <person name="Forrest D."/>
            <person name="Amos-Landgraf J."/>
            <person name="Schwartz D.C."/>
            <person name="Cheng Z."/>
            <person name="Lindblad-Toh K."/>
            <person name="Eichler E.E."/>
            <person name="Ponting C.P."/>
        </authorList>
    </citation>
    <scope>NUCLEOTIDE SEQUENCE [LARGE SCALE GENOMIC DNA]</scope>
    <source>
        <strain>C57BL/6J</strain>
    </source>
</reference>
<reference key="3">
    <citation type="journal article" date="2010" name="Cell">
        <title>A tissue-specific atlas of mouse protein phosphorylation and expression.</title>
        <authorList>
            <person name="Huttlin E.L."/>
            <person name="Jedrychowski M.P."/>
            <person name="Elias J.E."/>
            <person name="Goswami T."/>
            <person name="Rad R."/>
            <person name="Beausoleil S.A."/>
            <person name="Villen J."/>
            <person name="Haas W."/>
            <person name="Sowa M.E."/>
            <person name="Gygi S.P."/>
        </authorList>
    </citation>
    <scope>IDENTIFICATION BY MASS SPECTROMETRY [LARGE SCALE ANALYSIS]</scope>
    <source>
        <tissue>Kidney</tissue>
        <tissue>Liver</tissue>
        <tissue>Lung</tissue>
        <tissue>Pancreas</tissue>
        <tissue>Testis</tissue>
    </source>
</reference>
<comment type="subcellular location">
    <subcellularLocation>
        <location evidence="2">Membrane</location>
        <topology evidence="2">Multi-pass membrane protein</topology>
    </subcellularLocation>
</comment>
<comment type="similarity">
    <text evidence="2">Belongs to the DoxX family.</text>
</comment>
<evidence type="ECO:0000255" key="1"/>
<evidence type="ECO:0000305" key="2"/>
<evidence type="ECO:0000312" key="3">
    <source>
        <dbReference type="MGI" id="MGI:3758095"/>
    </source>
</evidence>
<dbReference type="EMBL" id="AK156456">
    <property type="protein sequence ID" value="BAE33719.1"/>
    <property type="molecule type" value="mRNA"/>
</dbReference>
<dbReference type="EMBL" id="AL606985">
    <property type="status" value="NOT_ANNOTATED_CDS"/>
    <property type="molecule type" value="Genomic_DNA"/>
</dbReference>
<dbReference type="CCDS" id="CCDS38882.1"/>
<dbReference type="RefSeq" id="NP_001092789.1">
    <property type="nucleotide sequence ID" value="NM_001099319.2"/>
</dbReference>
<dbReference type="SMR" id="Q3U0Y2"/>
<dbReference type="FunCoup" id="Q3U0Y2">
    <property type="interactions" value="10"/>
</dbReference>
<dbReference type="STRING" id="10090.ENSMUSP00000092302"/>
<dbReference type="PhosphoSitePlus" id="Q3U0Y2"/>
<dbReference type="PaxDb" id="10090-ENSMUSP00000092302"/>
<dbReference type="ProteomicsDB" id="260699"/>
<dbReference type="Antibodypedia" id="64058">
    <property type="antibodies" value="4 antibodies from 4 providers"/>
</dbReference>
<dbReference type="Ensembl" id="ENSMUST00000094712.5">
    <property type="protein sequence ID" value="ENSMUSP00000092302.5"/>
    <property type="gene ID" value="ENSMUSG00000070737.11"/>
</dbReference>
<dbReference type="GeneID" id="100039968"/>
<dbReference type="KEGG" id="mmu:100039968"/>
<dbReference type="UCSC" id="uc008uun.2">
    <property type="organism name" value="mouse"/>
</dbReference>
<dbReference type="AGR" id="MGI:3758095"/>
<dbReference type="CTD" id="100506144"/>
<dbReference type="MGI" id="MGI:3758095">
    <property type="gene designation" value="Tmem35b"/>
</dbReference>
<dbReference type="VEuPathDB" id="HostDB:ENSMUSG00000070737"/>
<dbReference type="eggNOG" id="ENOG502RXPR">
    <property type="taxonomic scope" value="Eukaryota"/>
</dbReference>
<dbReference type="GeneTree" id="ENSGT00940000154325"/>
<dbReference type="HOGENOM" id="CLU_121618_1_0_1"/>
<dbReference type="InParanoid" id="Q3U0Y2"/>
<dbReference type="OMA" id="PDPMNYQ"/>
<dbReference type="OrthoDB" id="432685at2759"/>
<dbReference type="PhylomeDB" id="Q3U0Y2"/>
<dbReference type="TreeFam" id="TF300206"/>
<dbReference type="BioGRID-ORCS" id="100039968">
    <property type="hits" value="1 hit in 69 CRISPR screens"/>
</dbReference>
<dbReference type="ChiTaRS" id="Tmem35b">
    <property type="organism name" value="mouse"/>
</dbReference>
<dbReference type="PRO" id="PR:Q3U0Y2"/>
<dbReference type="Proteomes" id="UP000000589">
    <property type="component" value="Chromosome 4"/>
</dbReference>
<dbReference type="RNAct" id="Q3U0Y2">
    <property type="molecule type" value="protein"/>
</dbReference>
<dbReference type="Bgee" id="ENSMUSG00000070737">
    <property type="expression patterns" value="Expressed in right kidney and 175 other cell types or tissues"/>
</dbReference>
<dbReference type="ExpressionAtlas" id="Q3U0Y2">
    <property type="expression patterns" value="baseline and differential"/>
</dbReference>
<dbReference type="GO" id="GO:0016020">
    <property type="term" value="C:membrane"/>
    <property type="evidence" value="ECO:0007669"/>
    <property type="project" value="UniProtKB-SubCell"/>
</dbReference>
<dbReference type="InterPro" id="IPR032808">
    <property type="entry name" value="DoxX"/>
</dbReference>
<dbReference type="InterPro" id="IPR040399">
    <property type="entry name" value="TMEM35A/B"/>
</dbReference>
<dbReference type="PANTHER" id="PTHR13163">
    <property type="entry name" value="SPINAL CORD EXPRESSION PROTEIN 4"/>
    <property type="match status" value="1"/>
</dbReference>
<dbReference type="PANTHER" id="PTHR13163:SF2">
    <property type="entry name" value="TRANSMEMBRANE PROTEIN 35B"/>
    <property type="match status" value="1"/>
</dbReference>
<dbReference type="Pfam" id="PF13564">
    <property type="entry name" value="DoxX_2"/>
    <property type="match status" value="1"/>
</dbReference>
<sequence length="150" mass="16223">MSFRVGVLRVLLGVFFALTGAAKLFQVSAPVSQQMRALFEQFAEVFPLKVFGYQPDPISYQTAVGWLELLAGLLLVVGPPVLQEISNVLLILLMMGAVFTLVVLKEPLSTYVPAAVCLGLLLLLDSCHFLARTKGAVRCPSKKIPPAHGN</sequence>
<proteinExistence type="evidence at protein level"/>
<gene>
    <name evidence="3" type="primary">Tmem35b</name>
    <name type="synonym">Gm12942</name>
    <name type="synonym">Zmym6nb</name>
</gene>
<keyword id="KW-0472">Membrane</keyword>
<keyword id="KW-1185">Reference proteome</keyword>
<keyword id="KW-0732">Signal</keyword>
<keyword id="KW-0812">Transmembrane</keyword>
<keyword id="KW-1133">Transmembrane helix</keyword>
<name>TM35B_MOUSE</name>
<feature type="signal peptide" evidence="1">
    <location>
        <begin position="1"/>
        <end position="21"/>
    </location>
</feature>
<feature type="chain" id="PRO_0000411097" description="Transmembrane protein 35B">
    <location>
        <begin position="22"/>
        <end position="150"/>
    </location>
</feature>
<feature type="transmembrane region" description="Helical" evidence="1">
    <location>
        <begin position="62"/>
        <end position="82"/>
    </location>
</feature>
<feature type="transmembrane region" description="Helical" evidence="1">
    <location>
        <begin position="84"/>
        <end position="104"/>
    </location>
</feature>
<feature type="transmembrane region" description="Helical" evidence="1">
    <location>
        <begin position="111"/>
        <end position="131"/>
    </location>
</feature>
<feature type="sequence conflict" description="In Ref. 1; BAE33719." evidence="2" ref="1">
    <original>G</original>
    <variation>S</variation>
    <location>
        <position position="149"/>
    </location>
</feature>
<accession>Q3U0Y2</accession>
<accession>A2A7U4</accession>
<organism>
    <name type="scientific">Mus musculus</name>
    <name type="common">Mouse</name>
    <dbReference type="NCBI Taxonomy" id="10090"/>
    <lineage>
        <taxon>Eukaryota</taxon>
        <taxon>Metazoa</taxon>
        <taxon>Chordata</taxon>
        <taxon>Craniata</taxon>
        <taxon>Vertebrata</taxon>
        <taxon>Euteleostomi</taxon>
        <taxon>Mammalia</taxon>
        <taxon>Eutheria</taxon>
        <taxon>Euarchontoglires</taxon>
        <taxon>Glires</taxon>
        <taxon>Rodentia</taxon>
        <taxon>Myomorpha</taxon>
        <taxon>Muroidea</taxon>
        <taxon>Muridae</taxon>
        <taxon>Murinae</taxon>
        <taxon>Mus</taxon>
        <taxon>Mus</taxon>
    </lineage>
</organism>